<reference key="1">
    <citation type="journal article" date="1997" name="Plant J.">
        <title>ZmEsr, a novel endosperm-specific gene expressed in a restricted region around the maize embryo.</title>
        <authorList>
            <person name="Opsahl-Ferstad H.G."/>
            <person name="Le Deunff E."/>
            <person name="Dumas C."/>
            <person name="Rogowsky P.M."/>
        </authorList>
    </citation>
    <scope>NUCLEOTIDE SEQUENCE [GENOMIC DNA / MRNA]</scope>
    <scope>TISSUE SPECIFICITY</scope>
    <scope>DEVELOPMENTAL STAGE</scope>
    <source>
        <strain>cv. A188</strain>
        <tissue>Endosperm</tissue>
    </source>
</reference>
<reference key="2">
    <citation type="journal article" date="2009" name="Plant Mol. Biol.">
        <title>Insights into corn genes derived from large-scale cDNA sequencing.</title>
        <authorList>
            <person name="Alexandrov N.N."/>
            <person name="Brover V.V."/>
            <person name="Freidin S."/>
            <person name="Troukhan M.E."/>
            <person name="Tatarinova T.V."/>
            <person name="Zhang H."/>
            <person name="Swaller T.J."/>
            <person name="Lu Y.-P."/>
            <person name="Bouck J."/>
            <person name="Flavell R.B."/>
            <person name="Feldmann K.A."/>
        </authorList>
    </citation>
    <scope>NUCLEOTIDE SEQUENCE [LARGE SCALE MRNA]</scope>
</reference>
<reference key="3">
    <citation type="journal article" date="2008" name="Cell. Mol. Life Sci.">
        <title>The CLE family of plant polypeptide signaling molecules.</title>
        <authorList>
            <person name="Jun J.H."/>
            <person name="Fiume E."/>
            <person name="Fletcher J.C."/>
        </authorList>
    </citation>
    <scope>REVIEW</scope>
</reference>
<reference key="4">
    <citation type="journal article" date="2010" name="Protoplasma">
        <title>CLE peptide signaling during plant development.</title>
        <authorList>
            <person name="Wang G."/>
            <person name="Fiers M."/>
        </authorList>
    </citation>
    <scope>REVIEW</scope>
</reference>
<feature type="signal peptide" evidence="3">
    <location>
        <begin position="1"/>
        <end position="26"/>
    </location>
</feature>
<feature type="chain" id="PRO_0000401225" description="CLAVATA3/ESR (CLE)-related protein 2-B">
    <location>
        <begin position="27"/>
        <end position="132"/>
    </location>
</feature>
<feature type="peptide" id="PRO_0000401226" description="ESR2Bp" evidence="2">
    <location>
        <begin position="79"/>
        <end position="90"/>
    </location>
</feature>
<feature type="region of interest" description="Disordered" evidence="4">
    <location>
        <begin position="68"/>
        <end position="132"/>
    </location>
</feature>
<feature type="modified residue" description="Hydroxyproline" evidence="2">
    <location>
        <position position="82"/>
    </location>
</feature>
<feature type="modified residue" description="Hydroxyproline" evidence="2">
    <location>
        <position position="85"/>
    </location>
</feature>
<feature type="glycosylation site" description="O-linked (Ara...) hydroxyproline" evidence="2">
    <location>
        <position position="85"/>
    </location>
</feature>
<feature type="sequence conflict" description="In Ref. 2; ACG26360." evidence="7" ref="2">
    <original>S</original>
    <variation>L</variation>
    <location>
        <position position="66"/>
    </location>
</feature>
<feature type="sequence conflict" description="In Ref. 2; ACG26360." evidence="7" ref="2">
    <original>L</original>
    <variation>P</variation>
    <location>
        <position position="122"/>
    </location>
</feature>
<organism>
    <name type="scientific">Zea mays</name>
    <name type="common">Maize</name>
    <dbReference type="NCBI Taxonomy" id="4577"/>
    <lineage>
        <taxon>Eukaryota</taxon>
        <taxon>Viridiplantae</taxon>
        <taxon>Streptophyta</taxon>
        <taxon>Embryophyta</taxon>
        <taxon>Tracheophyta</taxon>
        <taxon>Spermatophyta</taxon>
        <taxon>Magnoliopsida</taxon>
        <taxon>Liliopsida</taxon>
        <taxon>Poales</taxon>
        <taxon>Poaceae</taxon>
        <taxon>PACMAD clade</taxon>
        <taxon>Panicoideae</taxon>
        <taxon>Andropogonodae</taxon>
        <taxon>Andropogoneae</taxon>
        <taxon>Tripsacinae</taxon>
        <taxon>Zea</taxon>
    </lineage>
</organism>
<proteinExistence type="evidence at transcript level"/>
<protein>
    <recommendedName>
        <fullName evidence="6">CLAVATA3/ESR (CLE)-related protein 2-B</fullName>
    </recommendedName>
    <alternativeName>
        <fullName evidence="6">Embryo surrounding region protein 2-B</fullName>
    </alternativeName>
    <component>
        <recommendedName>
            <fullName evidence="6">ESR2Bp</fullName>
        </recommendedName>
    </component>
</protein>
<evidence type="ECO:0000250" key="1"/>
<evidence type="ECO:0000250" key="2">
    <source>
        <dbReference type="UniProtKB" id="O49519"/>
    </source>
</evidence>
<evidence type="ECO:0000255" key="3"/>
<evidence type="ECO:0000256" key="4">
    <source>
        <dbReference type="SAM" id="MobiDB-lite"/>
    </source>
</evidence>
<evidence type="ECO:0000269" key="5">
    <source>
    </source>
</evidence>
<evidence type="ECO:0000303" key="6">
    <source>
    </source>
</evidence>
<evidence type="ECO:0000305" key="7"/>
<name>ESR2B_MAIZE</name>
<gene>
    <name evidence="6" type="primary">ESR2B</name>
    <name evidence="6" type="synonym">ESR2c1</name>
    <name evidence="6" type="synonym">ESR2g2</name>
</gene>
<dbReference type="EMBL" id="X98498">
    <property type="protein sequence ID" value="CAA67124.1"/>
    <property type="molecule type" value="mRNA"/>
</dbReference>
<dbReference type="EMBL" id="X99969">
    <property type="protein sequence ID" value="CAA68231.1"/>
    <property type="molecule type" value="Genomic_DNA"/>
</dbReference>
<dbReference type="EMBL" id="EU954242">
    <property type="protein sequence ID" value="ACG26360.1"/>
    <property type="status" value="ALT_INIT"/>
    <property type="molecule type" value="mRNA"/>
</dbReference>
<dbReference type="PIR" id="T03282">
    <property type="entry name" value="T03282"/>
</dbReference>
<dbReference type="RefSeq" id="NP_001314979.1">
    <property type="nucleotide sequence ID" value="NM_001328050.1"/>
</dbReference>
<dbReference type="STRING" id="4577.O24618"/>
<dbReference type="GlyCosmos" id="O24618">
    <property type="glycosylation" value="1 site, No reported glycans"/>
</dbReference>
<dbReference type="PaxDb" id="4577-GRMZM2G315601_P01"/>
<dbReference type="GeneID" id="542448"/>
<dbReference type="KEGG" id="zma:542448"/>
<dbReference type="MaizeGDB" id="230285"/>
<dbReference type="eggNOG" id="ENOG502R4SP">
    <property type="taxonomic scope" value="Eukaryota"/>
</dbReference>
<dbReference type="InParanoid" id="O24618"/>
<dbReference type="OrthoDB" id="662284at2759"/>
<dbReference type="Proteomes" id="UP000007305">
    <property type="component" value="Unplaced"/>
</dbReference>
<dbReference type="ExpressionAtlas" id="O24618">
    <property type="expression patterns" value="baseline and differential"/>
</dbReference>
<dbReference type="GO" id="GO:0048046">
    <property type="term" value="C:apoplast"/>
    <property type="evidence" value="ECO:0000250"/>
    <property type="project" value="UniProtKB"/>
</dbReference>
<dbReference type="GO" id="GO:0033612">
    <property type="term" value="F:receptor serine/threonine kinase binding"/>
    <property type="evidence" value="ECO:0000250"/>
    <property type="project" value="UniProtKB"/>
</dbReference>
<dbReference type="GO" id="GO:0045168">
    <property type="term" value="P:cell-cell signaling involved in cell fate commitment"/>
    <property type="evidence" value="ECO:0000250"/>
    <property type="project" value="UniProtKB"/>
</dbReference>
<dbReference type="InterPro" id="IPR044962">
    <property type="entry name" value="CLV3/ESR"/>
</dbReference>
<dbReference type="PANTHER" id="PTHR36349">
    <property type="entry name" value="PROTEIN CLAVATA 3"/>
    <property type="match status" value="1"/>
</dbReference>
<dbReference type="PANTHER" id="PTHR36349:SF2">
    <property type="entry name" value="PROTEIN CLAVATA 3"/>
    <property type="match status" value="1"/>
</dbReference>
<keyword id="KW-0217">Developmental protein</keyword>
<keyword id="KW-0221">Differentiation</keyword>
<keyword id="KW-0325">Glycoprotein</keyword>
<keyword id="KW-0379">Hydroxylation</keyword>
<keyword id="KW-1185">Reference proteome</keyword>
<keyword id="KW-0964">Secreted</keyword>
<keyword id="KW-0732">Signal</keyword>
<sequence>MASRMGMVAILSLFVCALVASTSVNANVWQTDEDAFYSTNKLGVNGNMEMAQQQGGFIGHRPRLASFNRASKQLDREKRPVPSGPDPIHHSIPSHAPQHPPSYGKAPYEDDKSIASPGLSNLIGPPPFLDRY</sequence>
<comment type="function">
    <molecule>ESR2Bp</molecule>
    <text evidence="1">Extracellular signal peptide that regulates cell fate.</text>
</comment>
<comment type="subcellular location">
    <molecule>ESR2Bp</molecule>
    <subcellularLocation>
        <location evidence="1">Secreted</location>
        <location evidence="1">Extracellular space</location>
    </subcellularLocation>
</comment>
<comment type="tissue specificity">
    <molecule>ESR2Bp</molecule>
    <text evidence="5">Seed endosperm.</text>
</comment>
<comment type="developmental stage">
    <molecule>ESR2Bp</molecule>
    <text evidence="5">Expressed specifically in the embryo surrounding region at the micropylar end of the seed endosperm at early stages (4 to 7 days after pollination, DAP) and ever-decreasing parts of the suspensor at subsequent stages.</text>
</comment>
<comment type="PTM">
    <molecule>ESR2Bp</molecule>
    <text evidence="2">The O-glycosylation (arabinosylation) of the hydroxyproline Pro-85 enhances binding affinity of the ESR2Bp peptide for its receptor.</text>
</comment>
<comment type="similarity">
    <text evidence="7">Belongs to the CLV3/ESR signal peptide family.</text>
</comment>
<comment type="sequence caution" evidence="7">
    <conflict type="erroneous initiation">
        <sequence resource="EMBL-CDS" id="ACG26360"/>
    </conflict>
    <text>Truncated N-terminus.</text>
</comment>
<accession>O24618</accession>
<accession>B6SNC7</accession>